<gene>
    <name evidence="1" type="primary">cofC</name>
    <name type="ordered locus">MTH_613</name>
</gene>
<proteinExistence type="inferred from homology"/>
<dbReference type="EC" id="2.7.7.68" evidence="1"/>
<dbReference type="EMBL" id="AE000666">
    <property type="protein sequence ID" value="AAB85119.1"/>
    <property type="molecule type" value="Genomic_DNA"/>
</dbReference>
<dbReference type="PIR" id="E69181">
    <property type="entry name" value="E69181"/>
</dbReference>
<dbReference type="RefSeq" id="WP_010876252.1">
    <property type="nucleotide sequence ID" value="NC_000916.1"/>
</dbReference>
<dbReference type="SMR" id="O26710"/>
<dbReference type="FunCoup" id="O26710">
    <property type="interactions" value="90"/>
</dbReference>
<dbReference type="STRING" id="187420.MTH_613"/>
<dbReference type="PaxDb" id="187420-MTH_613"/>
<dbReference type="EnsemblBacteria" id="AAB85119">
    <property type="protein sequence ID" value="AAB85119"/>
    <property type="gene ID" value="MTH_613"/>
</dbReference>
<dbReference type="GeneID" id="1470574"/>
<dbReference type="KEGG" id="mth:MTH_613"/>
<dbReference type="PATRIC" id="fig|187420.15.peg.594"/>
<dbReference type="HOGENOM" id="CLU_076569_2_0_2"/>
<dbReference type="InParanoid" id="O26710"/>
<dbReference type="UniPathway" id="UPA00071"/>
<dbReference type="Proteomes" id="UP000005223">
    <property type="component" value="Chromosome"/>
</dbReference>
<dbReference type="GO" id="GO:0005525">
    <property type="term" value="F:GTP binding"/>
    <property type="evidence" value="ECO:0007669"/>
    <property type="project" value="UniProtKB-KW"/>
</dbReference>
<dbReference type="GO" id="GO:0043814">
    <property type="term" value="F:phospholactate guanylyltransferase activity"/>
    <property type="evidence" value="ECO:0007669"/>
    <property type="project" value="UniProtKB-EC"/>
</dbReference>
<dbReference type="GO" id="GO:0052645">
    <property type="term" value="P:F420-0 metabolic process"/>
    <property type="evidence" value="ECO:0007669"/>
    <property type="project" value="UniProtKB-UniRule"/>
</dbReference>
<dbReference type="Gene3D" id="6.10.140.50">
    <property type="match status" value="1"/>
</dbReference>
<dbReference type="Gene3D" id="3.90.550.10">
    <property type="entry name" value="Spore Coat Polysaccharide Biosynthesis Protein SpsA, Chain A"/>
    <property type="match status" value="1"/>
</dbReference>
<dbReference type="HAMAP" id="MF_02114">
    <property type="entry name" value="CofC"/>
    <property type="match status" value="1"/>
</dbReference>
<dbReference type="InterPro" id="IPR002835">
    <property type="entry name" value="CofC"/>
</dbReference>
<dbReference type="InterPro" id="IPR029044">
    <property type="entry name" value="Nucleotide-diphossugar_trans"/>
</dbReference>
<dbReference type="NCBIfam" id="TIGR03552">
    <property type="entry name" value="F420_cofC"/>
    <property type="match status" value="1"/>
</dbReference>
<dbReference type="PANTHER" id="PTHR40392">
    <property type="entry name" value="2-PHOSPHO-L-LACTATE GUANYLYLTRANSFERASE"/>
    <property type="match status" value="1"/>
</dbReference>
<dbReference type="PANTHER" id="PTHR40392:SF1">
    <property type="entry name" value="2-PHOSPHO-L-LACTATE GUANYLYLTRANSFERASE"/>
    <property type="match status" value="1"/>
</dbReference>
<dbReference type="Pfam" id="PF01983">
    <property type="entry name" value="CofC"/>
    <property type="match status" value="1"/>
</dbReference>
<dbReference type="SUPFAM" id="SSF53448">
    <property type="entry name" value="Nucleotide-diphospho-sugar transferases"/>
    <property type="match status" value="1"/>
</dbReference>
<accession>O26710</accession>
<feature type="chain" id="PRO_0000398734" description="2-phospho-L-lactate guanylyltransferase">
    <location>
        <begin position="1"/>
        <end position="223"/>
    </location>
</feature>
<evidence type="ECO:0000255" key="1">
    <source>
        <dbReference type="HAMAP-Rule" id="MF_02114"/>
    </source>
</evidence>
<organism>
    <name type="scientific">Methanothermobacter thermautotrophicus (strain ATCC 29096 / DSM 1053 / JCM 10044 / NBRC 100330 / Delta H)</name>
    <name type="common">Methanobacterium thermoautotrophicum</name>
    <dbReference type="NCBI Taxonomy" id="187420"/>
    <lineage>
        <taxon>Archaea</taxon>
        <taxon>Methanobacteriati</taxon>
        <taxon>Methanobacteriota</taxon>
        <taxon>Methanomada group</taxon>
        <taxon>Methanobacteria</taxon>
        <taxon>Methanobacteriales</taxon>
        <taxon>Methanobacteriaceae</taxon>
        <taxon>Methanothermobacter</taxon>
    </lineage>
</organism>
<keyword id="KW-0342">GTP-binding</keyword>
<keyword id="KW-0547">Nucleotide-binding</keyword>
<keyword id="KW-0548">Nucleotidyltransferase</keyword>
<keyword id="KW-1185">Reference proteome</keyword>
<keyword id="KW-0808">Transferase</keyword>
<reference key="1">
    <citation type="journal article" date="1997" name="J. Bacteriol.">
        <title>Complete genome sequence of Methanobacterium thermoautotrophicum deltaH: functional analysis and comparative genomics.</title>
        <authorList>
            <person name="Smith D.R."/>
            <person name="Doucette-Stamm L.A."/>
            <person name="Deloughery C."/>
            <person name="Lee H.-M."/>
            <person name="Dubois J."/>
            <person name="Aldredge T."/>
            <person name="Bashirzadeh R."/>
            <person name="Blakely D."/>
            <person name="Cook R."/>
            <person name="Gilbert K."/>
            <person name="Harrison D."/>
            <person name="Hoang L."/>
            <person name="Keagle P."/>
            <person name="Lumm W."/>
            <person name="Pothier B."/>
            <person name="Qiu D."/>
            <person name="Spadafora R."/>
            <person name="Vicare R."/>
            <person name="Wang Y."/>
            <person name="Wierzbowski J."/>
            <person name="Gibson R."/>
            <person name="Jiwani N."/>
            <person name="Caruso A."/>
            <person name="Bush D."/>
            <person name="Safer H."/>
            <person name="Patwell D."/>
            <person name="Prabhakar S."/>
            <person name="McDougall S."/>
            <person name="Shimer G."/>
            <person name="Goyal A."/>
            <person name="Pietrovski S."/>
            <person name="Church G.M."/>
            <person name="Daniels C.J."/>
            <person name="Mao J.-I."/>
            <person name="Rice P."/>
            <person name="Noelling J."/>
            <person name="Reeve J.N."/>
        </authorList>
    </citation>
    <scope>NUCLEOTIDE SEQUENCE [LARGE SCALE GENOMIC DNA]</scope>
    <source>
        <strain>ATCC 29096 / DSM 1053 / JCM 10044 / NBRC 100330 / Delta H</strain>
    </source>
</reference>
<sequence>MKTCAIIPVSRFTHAKTRLSPTLSPSEREGLLKAMLMDVSGALARHVDRVLVISADEDVLEYAYSLGLKILEEEGERDLNGALEQAMDFCAPEFDRVIITPSDIPLIGKADVSNLLDHASRADVVIAPANGGGTNTLILRPSAMSLRFGDCSFFEHIHEARERGLSVSVYDSFYLSLDVNTAEDLGEIILHGEGTHAREYLRKLRFTVKPSRGSDRLEVSRSP</sequence>
<comment type="function">
    <text evidence="1">Guanylyltransferase that catalyzes the activation of (2S)-2-phospholactate (2-PL) as (2S)-lactyl-2-diphospho-5'-guanosine, via the condensation of 2-PL with GTP. It is involved in the biosynthesis of coenzyme F420, a hydride carrier cofactor.</text>
</comment>
<comment type="catalytic activity">
    <reaction evidence="1">
        <text>(2S)-2-phospholactate + GTP + H(+) = (2S)-lactyl-2-diphospho-5'-guanosine + diphosphate</text>
        <dbReference type="Rhea" id="RHEA:63424"/>
        <dbReference type="ChEBI" id="CHEBI:15378"/>
        <dbReference type="ChEBI" id="CHEBI:33019"/>
        <dbReference type="ChEBI" id="CHEBI:37565"/>
        <dbReference type="ChEBI" id="CHEBI:59435"/>
        <dbReference type="ChEBI" id="CHEBI:59906"/>
        <dbReference type="EC" id="2.7.7.68"/>
    </reaction>
</comment>
<comment type="pathway">
    <text evidence="1">Cofactor biosynthesis; coenzyme F420 biosynthesis.</text>
</comment>
<comment type="subunit">
    <text evidence="1">Homodimer.</text>
</comment>
<comment type="similarity">
    <text evidence="1">Belongs to the CofC family.</text>
</comment>
<protein>
    <recommendedName>
        <fullName evidence="1">2-phospho-L-lactate guanylyltransferase</fullName>
        <shortName evidence="1">LP guanylyltransferase</shortName>
        <ecNumber evidence="1">2.7.7.68</ecNumber>
    </recommendedName>
</protein>
<name>COFC_METTH</name>